<protein>
    <recommendedName>
        <fullName>Pre-mRNA-splicing factor SLT11</fullName>
    </recommendedName>
</protein>
<comment type="function">
    <text evidence="1">Involved in pre-mRNA splicing. Facilitates the cooperative formation of U2/U6 helix II in association with stem II in the spliceosome. Binds to RNA (By similarity).</text>
</comment>
<comment type="subunit">
    <text evidence="1">Associated with the spliceosome.</text>
</comment>
<comment type="subcellular location">
    <subcellularLocation>
        <location evidence="1">Nucleus</location>
    </subcellularLocation>
</comment>
<comment type="similarity">
    <text evidence="3">Belongs to the SLT11 family.</text>
</comment>
<dbReference type="EMBL" id="CR380958">
    <property type="protein sequence ID" value="CAG62072.1"/>
    <property type="molecule type" value="Genomic_DNA"/>
</dbReference>
<dbReference type="RefSeq" id="XP_449102.1">
    <property type="nucleotide sequence ID" value="XM_449102.1"/>
</dbReference>
<dbReference type="SMR" id="Q6FKZ2"/>
<dbReference type="FunCoup" id="Q6FKZ2">
    <property type="interactions" value="180"/>
</dbReference>
<dbReference type="STRING" id="284593.Q6FKZ2"/>
<dbReference type="EnsemblFungi" id="CAGL0L07458g-T">
    <property type="protein sequence ID" value="CAGL0L07458g-T-p1"/>
    <property type="gene ID" value="CAGL0L07458g"/>
</dbReference>
<dbReference type="KEGG" id="cgr:2890990"/>
<dbReference type="CGD" id="CAL0136050">
    <property type="gene designation" value="CAGL0L07458g"/>
</dbReference>
<dbReference type="VEuPathDB" id="FungiDB:CAGL0L07458g"/>
<dbReference type="eggNOG" id="KOG0153">
    <property type="taxonomic scope" value="Eukaryota"/>
</dbReference>
<dbReference type="HOGENOM" id="CLU_027112_1_1_1"/>
<dbReference type="InParanoid" id="Q6FKZ2"/>
<dbReference type="OMA" id="RNVCQCC"/>
<dbReference type="Proteomes" id="UP000002428">
    <property type="component" value="Chromosome L"/>
</dbReference>
<dbReference type="GO" id="GO:0000974">
    <property type="term" value="C:Prp19 complex"/>
    <property type="evidence" value="ECO:0007669"/>
    <property type="project" value="EnsemblFungi"/>
</dbReference>
<dbReference type="GO" id="GO:0071006">
    <property type="term" value="C:U2-type catalytic step 1 spliceosome"/>
    <property type="evidence" value="ECO:0007669"/>
    <property type="project" value="TreeGrafter"/>
</dbReference>
<dbReference type="GO" id="GO:0071007">
    <property type="term" value="C:U2-type catalytic step 2 spliceosome"/>
    <property type="evidence" value="ECO:0007669"/>
    <property type="project" value="TreeGrafter"/>
</dbReference>
<dbReference type="GO" id="GO:0036002">
    <property type="term" value="F:pre-mRNA binding"/>
    <property type="evidence" value="ECO:0007669"/>
    <property type="project" value="TreeGrafter"/>
</dbReference>
<dbReference type="GO" id="GO:0017070">
    <property type="term" value="F:U6 snRNA binding"/>
    <property type="evidence" value="ECO:0007669"/>
    <property type="project" value="EnsemblFungi"/>
</dbReference>
<dbReference type="GO" id="GO:0000398">
    <property type="term" value="P:mRNA splicing, via spliceosome"/>
    <property type="evidence" value="ECO:0007669"/>
    <property type="project" value="EnsemblFungi"/>
</dbReference>
<dbReference type="CDD" id="cd12265">
    <property type="entry name" value="RRM_SLT11"/>
    <property type="match status" value="1"/>
</dbReference>
<dbReference type="InterPro" id="IPR039171">
    <property type="entry name" value="Cwc2/Slt11"/>
</dbReference>
<dbReference type="InterPro" id="IPR034356">
    <property type="entry name" value="Slt11_RRM"/>
</dbReference>
<dbReference type="InterPro" id="IPR048995">
    <property type="entry name" value="STL11/RBM22-like_N"/>
</dbReference>
<dbReference type="PANTHER" id="PTHR14089">
    <property type="entry name" value="PRE-MRNA-SPLICING FACTOR RBM22"/>
    <property type="match status" value="1"/>
</dbReference>
<dbReference type="PANTHER" id="PTHR14089:SF6">
    <property type="entry name" value="PRE-MRNA-SPLICING FACTOR RBM22"/>
    <property type="match status" value="1"/>
</dbReference>
<dbReference type="Pfam" id="PF21369">
    <property type="entry name" value="STL11_N"/>
    <property type="match status" value="1"/>
</dbReference>
<keyword id="KW-0507">mRNA processing</keyword>
<keyword id="KW-0508">mRNA splicing</keyword>
<keyword id="KW-0539">Nucleus</keyword>
<keyword id="KW-1185">Reference proteome</keyword>
<keyword id="KW-0694">RNA-binding</keyword>
<keyword id="KW-0747">Spliceosome</keyword>
<gene>
    <name type="primary">SLT11</name>
    <name type="ordered locus">CAGL0L07458g</name>
</gene>
<name>SLT11_CANGA</name>
<evidence type="ECO:0000250" key="1"/>
<evidence type="ECO:0000256" key="2">
    <source>
        <dbReference type="SAM" id="MobiDB-lite"/>
    </source>
</evidence>
<evidence type="ECO:0000305" key="3"/>
<accession>Q6FKZ2</accession>
<proteinExistence type="inferred from homology"/>
<feature type="chain" id="PRO_0000212424" description="Pre-mRNA-splicing factor SLT11">
    <location>
        <begin position="1"/>
        <end position="364"/>
    </location>
</feature>
<feature type="region of interest" description="Disordered" evidence="2">
    <location>
        <begin position="339"/>
        <end position="364"/>
    </location>
</feature>
<feature type="compositionally biased region" description="Basic residues" evidence="2">
    <location>
        <begin position="346"/>
        <end position="364"/>
    </location>
</feature>
<sequence>MNKLILGSEEVPQICEKCLGTSNTNENIRMNEVPNGAACKICTLPYTLYHFKKSHRSADIIKTLICKKCAIQRNVCQCCMLDMKLHISIQLRDKLMSIVSGKETITEEAKNIMMKKFIAMKGGSLGSADLTRNVDSIEDILLNLREKLEGKPLNDENEPISALQNKELGDNPHLKSVDIQPYWDKFPLQETFPNAIQIPKGNDSFKSFFIYNIDSSVPEWKISDKITELLGSDSWKTKESIPIIINHKAMCGAFRIGNNELSEKFLQTINNSDNMIRINRSNGLRRGILKVDHFQLFIIPWKQGFSVESFGRTPNESKKIAFALREIIVEEMGGFKDKNDRCKAKEKPKKITKKSKKRVKSIKI</sequence>
<organism>
    <name type="scientific">Candida glabrata (strain ATCC 2001 / BCRC 20586 / JCM 3761 / NBRC 0622 / NRRL Y-65 / CBS 138)</name>
    <name type="common">Yeast</name>
    <name type="synonym">Nakaseomyces glabratus</name>
    <dbReference type="NCBI Taxonomy" id="284593"/>
    <lineage>
        <taxon>Eukaryota</taxon>
        <taxon>Fungi</taxon>
        <taxon>Dikarya</taxon>
        <taxon>Ascomycota</taxon>
        <taxon>Saccharomycotina</taxon>
        <taxon>Saccharomycetes</taxon>
        <taxon>Saccharomycetales</taxon>
        <taxon>Saccharomycetaceae</taxon>
        <taxon>Nakaseomyces</taxon>
    </lineage>
</organism>
<reference key="1">
    <citation type="journal article" date="2004" name="Nature">
        <title>Genome evolution in yeasts.</title>
        <authorList>
            <person name="Dujon B."/>
            <person name="Sherman D."/>
            <person name="Fischer G."/>
            <person name="Durrens P."/>
            <person name="Casaregola S."/>
            <person name="Lafontaine I."/>
            <person name="de Montigny J."/>
            <person name="Marck C."/>
            <person name="Neuveglise C."/>
            <person name="Talla E."/>
            <person name="Goffard N."/>
            <person name="Frangeul L."/>
            <person name="Aigle M."/>
            <person name="Anthouard V."/>
            <person name="Babour A."/>
            <person name="Barbe V."/>
            <person name="Barnay S."/>
            <person name="Blanchin S."/>
            <person name="Beckerich J.-M."/>
            <person name="Beyne E."/>
            <person name="Bleykasten C."/>
            <person name="Boisrame A."/>
            <person name="Boyer J."/>
            <person name="Cattolico L."/>
            <person name="Confanioleri F."/>
            <person name="de Daruvar A."/>
            <person name="Despons L."/>
            <person name="Fabre E."/>
            <person name="Fairhead C."/>
            <person name="Ferry-Dumazet H."/>
            <person name="Groppi A."/>
            <person name="Hantraye F."/>
            <person name="Hennequin C."/>
            <person name="Jauniaux N."/>
            <person name="Joyet P."/>
            <person name="Kachouri R."/>
            <person name="Kerrest A."/>
            <person name="Koszul R."/>
            <person name="Lemaire M."/>
            <person name="Lesur I."/>
            <person name="Ma L."/>
            <person name="Muller H."/>
            <person name="Nicaud J.-M."/>
            <person name="Nikolski M."/>
            <person name="Oztas S."/>
            <person name="Ozier-Kalogeropoulos O."/>
            <person name="Pellenz S."/>
            <person name="Potier S."/>
            <person name="Richard G.-F."/>
            <person name="Straub M.-L."/>
            <person name="Suleau A."/>
            <person name="Swennen D."/>
            <person name="Tekaia F."/>
            <person name="Wesolowski-Louvel M."/>
            <person name="Westhof E."/>
            <person name="Wirth B."/>
            <person name="Zeniou-Meyer M."/>
            <person name="Zivanovic Y."/>
            <person name="Bolotin-Fukuhara M."/>
            <person name="Thierry A."/>
            <person name="Bouchier C."/>
            <person name="Caudron B."/>
            <person name="Scarpelli C."/>
            <person name="Gaillardin C."/>
            <person name="Weissenbach J."/>
            <person name="Wincker P."/>
            <person name="Souciet J.-L."/>
        </authorList>
    </citation>
    <scope>NUCLEOTIDE SEQUENCE [LARGE SCALE GENOMIC DNA]</scope>
    <source>
        <strain>ATCC 2001 / BCRC 20586 / JCM 3761 / NBRC 0622 / NRRL Y-65 / CBS 138</strain>
    </source>
</reference>